<organism>
    <name type="scientific">Legionella pneumophila (strain Paris)</name>
    <dbReference type="NCBI Taxonomy" id="297246"/>
    <lineage>
        <taxon>Bacteria</taxon>
        <taxon>Pseudomonadati</taxon>
        <taxon>Pseudomonadota</taxon>
        <taxon>Gammaproteobacteria</taxon>
        <taxon>Legionellales</taxon>
        <taxon>Legionellaceae</taxon>
        <taxon>Legionella</taxon>
    </lineage>
</organism>
<protein>
    <recommendedName>
        <fullName evidence="1">Small ribosomal subunit protein uS17</fullName>
    </recommendedName>
    <alternativeName>
        <fullName evidence="2">30S ribosomal protein S17</fullName>
    </alternativeName>
</protein>
<keyword id="KW-0687">Ribonucleoprotein</keyword>
<keyword id="KW-0689">Ribosomal protein</keyword>
<keyword id="KW-0694">RNA-binding</keyword>
<keyword id="KW-0699">rRNA-binding</keyword>
<sequence length="84" mass="9637">MSTNSESNARTMIGKVVSDKMDKTIVVMIERTVKHPKYGKIMKRRTKLHAHDENQVCRVGNTVKIRESRPLSKTKSWVLVEVIS</sequence>
<feature type="chain" id="PRO_0000233496" description="Small ribosomal subunit protein uS17">
    <location>
        <begin position="1"/>
        <end position="84"/>
    </location>
</feature>
<gene>
    <name evidence="1" type="primary">rpsQ</name>
    <name type="ordered locus">lpp0403</name>
</gene>
<reference key="1">
    <citation type="journal article" date="2004" name="Nat. Genet.">
        <title>Evidence in the Legionella pneumophila genome for exploitation of host cell functions and high genome plasticity.</title>
        <authorList>
            <person name="Cazalet C."/>
            <person name="Rusniok C."/>
            <person name="Brueggemann H."/>
            <person name="Zidane N."/>
            <person name="Magnier A."/>
            <person name="Ma L."/>
            <person name="Tichit M."/>
            <person name="Jarraud S."/>
            <person name="Bouchier C."/>
            <person name="Vandenesch F."/>
            <person name="Kunst F."/>
            <person name="Etienne J."/>
            <person name="Glaser P."/>
            <person name="Buchrieser C."/>
        </authorList>
    </citation>
    <scope>NUCLEOTIDE SEQUENCE [LARGE SCALE GENOMIC DNA]</scope>
    <source>
        <strain>Paris</strain>
    </source>
</reference>
<comment type="function">
    <text evidence="1">One of the primary rRNA binding proteins, it binds specifically to the 5'-end of 16S ribosomal RNA.</text>
</comment>
<comment type="subunit">
    <text evidence="1">Part of the 30S ribosomal subunit.</text>
</comment>
<comment type="similarity">
    <text evidence="1">Belongs to the universal ribosomal protein uS17 family.</text>
</comment>
<dbReference type="EMBL" id="CR628336">
    <property type="protein sequence ID" value="CAH11551.1"/>
    <property type="molecule type" value="Genomic_DNA"/>
</dbReference>
<dbReference type="RefSeq" id="WP_010946087.1">
    <property type="nucleotide sequence ID" value="NC_006368.1"/>
</dbReference>
<dbReference type="SMR" id="Q5X850"/>
<dbReference type="GeneID" id="57034341"/>
<dbReference type="KEGG" id="lpp:lpp0403"/>
<dbReference type="LegioList" id="lpp0403"/>
<dbReference type="HOGENOM" id="CLU_073626_1_1_6"/>
<dbReference type="GO" id="GO:0022627">
    <property type="term" value="C:cytosolic small ribosomal subunit"/>
    <property type="evidence" value="ECO:0007669"/>
    <property type="project" value="TreeGrafter"/>
</dbReference>
<dbReference type="GO" id="GO:0019843">
    <property type="term" value="F:rRNA binding"/>
    <property type="evidence" value="ECO:0007669"/>
    <property type="project" value="UniProtKB-UniRule"/>
</dbReference>
<dbReference type="GO" id="GO:0003735">
    <property type="term" value="F:structural constituent of ribosome"/>
    <property type="evidence" value="ECO:0007669"/>
    <property type="project" value="InterPro"/>
</dbReference>
<dbReference type="GO" id="GO:0006412">
    <property type="term" value="P:translation"/>
    <property type="evidence" value="ECO:0007669"/>
    <property type="project" value="UniProtKB-UniRule"/>
</dbReference>
<dbReference type="CDD" id="cd00364">
    <property type="entry name" value="Ribosomal_uS17"/>
    <property type="match status" value="1"/>
</dbReference>
<dbReference type="Gene3D" id="2.40.50.140">
    <property type="entry name" value="Nucleic acid-binding proteins"/>
    <property type="match status" value="1"/>
</dbReference>
<dbReference type="HAMAP" id="MF_01345_B">
    <property type="entry name" value="Ribosomal_uS17_B"/>
    <property type="match status" value="1"/>
</dbReference>
<dbReference type="InterPro" id="IPR012340">
    <property type="entry name" value="NA-bd_OB-fold"/>
</dbReference>
<dbReference type="InterPro" id="IPR000266">
    <property type="entry name" value="Ribosomal_uS17"/>
</dbReference>
<dbReference type="InterPro" id="IPR019984">
    <property type="entry name" value="Ribosomal_uS17_bact/chlr"/>
</dbReference>
<dbReference type="NCBIfam" id="NF004123">
    <property type="entry name" value="PRK05610.1"/>
    <property type="match status" value="1"/>
</dbReference>
<dbReference type="NCBIfam" id="TIGR03635">
    <property type="entry name" value="uS17_bact"/>
    <property type="match status" value="1"/>
</dbReference>
<dbReference type="PANTHER" id="PTHR10744">
    <property type="entry name" value="40S RIBOSOMAL PROTEIN S11 FAMILY MEMBER"/>
    <property type="match status" value="1"/>
</dbReference>
<dbReference type="PANTHER" id="PTHR10744:SF1">
    <property type="entry name" value="SMALL RIBOSOMAL SUBUNIT PROTEIN US17M"/>
    <property type="match status" value="1"/>
</dbReference>
<dbReference type="Pfam" id="PF00366">
    <property type="entry name" value="Ribosomal_S17"/>
    <property type="match status" value="1"/>
</dbReference>
<dbReference type="PRINTS" id="PR00973">
    <property type="entry name" value="RIBOSOMALS17"/>
</dbReference>
<dbReference type="SUPFAM" id="SSF50249">
    <property type="entry name" value="Nucleic acid-binding proteins"/>
    <property type="match status" value="1"/>
</dbReference>
<accession>Q5X850</accession>
<proteinExistence type="inferred from homology"/>
<evidence type="ECO:0000255" key="1">
    <source>
        <dbReference type="HAMAP-Rule" id="MF_01345"/>
    </source>
</evidence>
<evidence type="ECO:0000305" key="2"/>
<name>RS17_LEGPA</name>